<organism>
    <name type="scientific">Rattus norvegicus</name>
    <name type="common">Rat</name>
    <dbReference type="NCBI Taxonomy" id="10116"/>
    <lineage>
        <taxon>Eukaryota</taxon>
        <taxon>Metazoa</taxon>
        <taxon>Chordata</taxon>
        <taxon>Craniata</taxon>
        <taxon>Vertebrata</taxon>
        <taxon>Euteleostomi</taxon>
        <taxon>Mammalia</taxon>
        <taxon>Eutheria</taxon>
        <taxon>Euarchontoglires</taxon>
        <taxon>Glires</taxon>
        <taxon>Rodentia</taxon>
        <taxon>Myomorpha</taxon>
        <taxon>Muroidea</taxon>
        <taxon>Muridae</taxon>
        <taxon>Murinae</taxon>
        <taxon>Rattus</taxon>
    </lineage>
</organism>
<proteinExistence type="evidence at protein level"/>
<accession>P24473</accession>
<accession>O09034</accession>
<keyword id="KW-0002">3D-structure</keyword>
<keyword id="KW-0007">Acetylation</keyword>
<keyword id="KW-0903">Direct protein sequencing</keyword>
<keyword id="KW-0496">Mitochondrion</keyword>
<keyword id="KW-1185">Reference proteome</keyword>
<keyword id="KW-0808">Transferase</keyword>
<feature type="initiator methionine" description="Removed" evidence="3">
    <location>
        <position position="1"/>
    </location>
</feature>
<feature type="chain" id="PRO_0000185893" description="Glutathione S-transferase kappa 1">
    <location>
        <begin position="2"/>
        <end position="226"/>
    </location>
</feature>
<feature type="binding site" evidence="2">
    <location>
        <begin position="16"/>
        <end position="18"/>
    </location>
    <ligand>
        <name>glutathione</name>
        <dbReference type="ChEBI" id="CHEBI:57925"/>
    </ligand>
</feature>
<feature type="binding site" evidence="2">
    <location>
        <position position="53"/>
    </location>
    <ligand>
        <name>glutathione</name>
        <dbReference type="ChEBI" id="CHEBI:57925"/>
    </ligand>
</feature>
<feature type="binding site" evidence="2">
    <location>
        <position position="183"/>
    </location>
    <ligand>
        <name>glutathione</name>
        <dbReference type="ChEBI" id="CHEBI:57925"/>
    </ligand>
</feature>
<feature type="binding site" evidence="2">
    <location>
        <begin position="200"/>
        <end position="201"/>
    </location>
    <ligand>
        <name>glutathione</name>
        <dbReference type="ChEBI" id="CHEBI:57925"/>
    </ligand>
</feature>
<feature type="modified residue" description="N6-succinyllysine" evidence="1">
    <location>
        <position position="36"/>
    </location>
</feature>
<feature type="modified residue" description="N6-succinyllysine" evidence="1">
    <location>
        <position position="49"/>
    </location>
</feature>
<feature type="modified residue" description="N6-acetyllysine; alternate" evidence="1">
    <location>
        <position position="68"/>
    </location>
</feature>
<feature type="modified residue" description="N6-succinyllysine; alternate" evidence="1">
    <location>
        <position position="68"/>
    </location>
</feature>
<feature type="modified residue" description="N6-acetyllysine; alternate" evidence="1">
    <location>
        <position position="74"/>
    </location>
</feature>
<feature type="modified residue" description="N6-succinyllysine; alternate" evidence="1">
    <location>
        <position position="74"/>
    </location>
</feature>
<feature type="modified residue" description="N6-acetyllysine" evidence="1">
    <location>
        <position position="85"/>
    </location>
</feature>
<feature type="modified residue" description="N6-acetyllysine; alternate" evidence="1">
    <location>
        <position position="93"/>
    </location>
</feature>
<feature type="modified residue" description="N6-succinyllysine; alternate" evidence="1">
    <location>
        <position position="93"/>
    </location>
</feature>
<feature type="modified residue" description="N6-acetyllysine; alternate" evidence="1">
    <location>
        <position position="116"/>
    </location>
</feature>
<feature type="modified residue" description="N6-succinyllysine; alternate" evidence="1">
    <location>
        <position position="116"/>
    </location>
</feature>
<feature type="modified residue" description="N6-succinyllysine" evidence="1">
    <location>
        <position position="144"/>
    </location>
</feature>
<feature type="modified residue" description="N6-acetyllysine; alternate" evidence="1">
    <location>
        <position position="158"/>
    </location>
</feature>
<feature type="modified residue" description="N6-succinyllysine; alternate" evidence="1">
    <location>
        <position position="158"/>
    </location>
</feature>
<feature type="modified residue" description="N6-acetyllysine" evidence="1">
    <location>
        <position position="165"/>
    </location>
</feature>
<feature type="modified residue" description="N6-acetyllysine; alternate" evidence="1">
    <location>
        <position position="167"/>
    </location>
</feature>
<feature type="modified residue" description="N6-succinyllysine; alternate" evidence="1">
    <location>
        <position position="167"/>
    </location>
</feature>
<feature type="modified residue" description="N6-acetyllysine; alternate" evidence="1">
    <location>
        <position position="177"/>
    </location>
</feature>
<feature type="modified residue" description="N6-succinyllysine; alternate" evidence="1">
    <location>
        <position position="177"/>
    </location>
</feature>
<feature type="modified residue" description="N6-succinyllysine" evidence="1">
    <location>
        <position position="193"/>
    </location>
</feature>
<feature type="mutagenesis site" description="Reduces catalytic activity about 30-fold. Reduces affinity for glutathione about 4-fold." evidence="2">
    <original>S</original>
    <variation>A</variation>
    <location>
        <position position="16"/>
    </location>
</feature>
<feature type="sequence conflict" description="In Ref. 2; AA sequence." evidence="4" ref="2">
    <original>G</original>
    <variation>C</variation>
    <location>
        <position position="2"/>
    </location>
</feature>
<feature type="strand" evidence="5">
    <location>
        <begin position="6"/>
        <end position="12"/>
    </location>
</feature>
<feature type="helix" evidence="5">
    <location>
        <begin position="17"/>
        <end position="29"/>
    </location>
</feature>
<feature type="turn" evidence="5">
    <location>
        <begin position="30"/>
        <end position="32"/>
    </location>
</feature>
<feature type="strand" evidence="5">
    <location>
        <begin position="33"/>
        <end position="41"/>
    </location>
</feature>
<feature type="helix" evidence="5">
    <location>
        <begin position="44"/>
        <end position="50"/>
    </location>
</feature>
<feature type="helix" evidence="5">
    <location>
        <begin position="60"/>
        <end position="77"/>
    </location>
</feature>
<feature type="turn" evidence="5">
    <location>
        <begin position="87"/>
        <end position="89"/>
    </location>
</feature>
<feature type="helix" evidence="5">
    <location>
        <begin position="90"/>
        <end position="94"/>
    </location>
</feature>
<feature type="helix" evidence="5">
    <location>
        <begin position="97"/>
        <end position="109"/>
    </location>
</feature>
<feature type="helix" evidence="5">
    <location>
        <begin position="111"/>
        <end position="113"/>
    </location>
</feature>
<feature type="helix" evidence="5">
    <location>
        <begin position="114"/>
        <end position="126"/>
    </location>
</feature>
<feature type="helix" evidence="5">
    <location>
        <begin position="135"/>
        <end position="144"/>
    </location>
</feature>
<feature type="helix" evidence="5">
    <location>
        <begin position="149"/>
        <end position="156"/>
    </location>
</feature>
<feature type="turn" evidence="5">
    <location>
        <begin position="157"/>
        <end position="160"/>
    </location>
</feature>
<feature type="helix" evidence="5">
    <location>
        <begin position="162"/>
        <end position="177"/>
    </location>
</feature>
<feature type="strand" evidence="5">
    <location>
        <begin position="185"/>
        <end position="190"/>
    </location>
</feature>
<feature type="strand" evidence="5">
    <location>
        <begin position="193"/>
        <end position="199"/>
    </location>
</feature>
<feature type="helix" evidence="5">
    <location>
        <begin position="203"/>
        <end position="210"/>
    </location>
</feature>
<protein>
    <recommendedName>
        <fullName>Glutathione S-transferase kappa 1</fullName>
        <ecNumber evidence="2">2.5.1.18</ecNumber>
    </recommendedName>
    <alternativeName>
        <fullName>GST 13-13</fullName>
    </alternativeName>
    <alternativeName>
        <fullName>GST class-kappa</fullName>
    </alternativeName>
    <alternativeName>
        <fullName>GSTK1-1</fullName>
        <shortName>rGSTK1</shortName>
    </alternativeName>
    <alternativeName>
        <fullName>Glutathione S-transferase subunit 13</fullName>
    </alternativeName>
</protein>
<comment type="function">
    <text evidence="2">Glutathione S-transferase that catalyzes the conjugation of glutathione to exogenous and endogenous compounds.</text>
</comment>
<comment type="catalytic activity">
    <reaction evidence="2">
        <text>RX + glutathione = an S-substituted glutathione + a halide anion + H(+)</text>
        <dbReference type="Rhea" id="RHEA:16437"/>
        <dbReference type="ChEBI" id="CHEBI:15378"/>
        <dbReference type="ChEBI" id="CHEBI:16042"/>
        <dbReference type="ChEBI" id="CHEBI:17792"/>
        <dbReference type="ChEBI" id="CHEBI:57925"/>
        <dbReference type="ChEBI" id="CHEBI:90779"/>
        <dbReference type="EC" id="2.5.1.18"/>
    </reaction>
</comment>
<comment type="subunit">
    <text evidence="2">Homodimer.</text>
</comment>
<comment type="subcellular location">
    <subcellularLocation>
        <location evidence="3">Mitochondrion matrix</location>
    </subcellularLocation>
</comment>
<comment type="similarity">
    <text evidence="4">Belongs to the GST superfamily. Kappa family.</text>
</comment>
<name>GSTK1_RAT</name>
<gene>
    <name type="primary">Gstk1</name>
</gene>
<evidence type="ECO:0000250" key="1">
    <source>
        <dbReference type="UniProtKB" id="Q9DCM2"/>
    </source>
</evidence>
<evidence type="ECO:0000269" key="2">
    <source>
    </source>
</evidence>
<evidence type="ECO:0000269" key="3">
    <source>
    </source>
</evidence>
<evidence type="ECO:0000305" key="4"/>
<evidence type="ECO:0007829" key="5">
    <source>
        <dbReference type="PDB" id="1R4W"/>
    </source>
</evidence>
<reference key="1">
    <citation type="journal article" date="1996" name="Biochem. J.">
        <title>Glutathione S-transferase class Kappa: characterization by the cloning of rat mitochondrial GST and identification of a human homologue.</title>
        <authorList>
            <person name="Pemble S.E."/>
            <person name="Wardle A.F."/>
            <person name="Taylor J.B."/>
        </authorList>
    </citation>
    <scope>NUCLEOTIDE SEQUENCE [MRNA]</scope>
    <source>
        <tissue>Liver</tissue>
    </source>
</reference>
<reference key="2">
    <citation type="journal article" date="1991" name="Biochem. J.">
        <title>A novel glutathione transferase (13-13) isolated from the matrix of rat liver mitochondria having structural similarity to class theta enzymes.</title>
        <authorList>
            <person name="Harris M.J."/>
            <person name="Meyer D.J."/>
            <person name="Coles B."/>
            <person name="Ketterer B."/>
        </authorList>
    </citation>
    <scope>PROTEIN SEQUENCE OF 2-34</scope>
    <scope>SUBCELLULAR LOCATION</scope>
</reference>
<reference key="3">
    <citation type="journal article" date="2004" name="Biochemistry">
        <title>Parallel evolutionary pathways for glutathione transferases: structure and mechanism of the mitochondrial class kappa enzyme rGSTK1-1.</title>
        <authorList>
            <person name="Ladner J.E."/>
            <person name="Parsons J.F."/>
            <person name="Rife C.L."/>
            <person name="Gilliland G.L."/>
            <person name="Armstrong R.N."/>
        </authorList>
    </citation>
    <scope>X-RAY CRYSTALLOGRAPHY (2.5 ANGSTROMS) IN COMPLEX WITH GLUTATHIONE</scope>
    <scope>SUBUNIT</scope>
    <scope>MUTAGENESIS OF SER-16</scope>
</reference>
<dbReference type="EC" id="2.5.1.18" evidence="2"/>
<dbReference type="EMBL" id="S83436">
    <property type="protein sequence ID" value="AAB50831.1"/>
    <property type="molecule type" value="mRNA"/>
</dbReference>
<dbReference type="PIR" id="S17164">
    <property type="entry name" value="S17164"/>
</dbReference>
<dbReference type="RefSeq" id="NP_852036.1">
    <property type="nucleotide sequence ID" value="NM_181371.2"/>
</dbReference>
<dbReference type="PDB" id="1R4W">
    <property type="method" value="X-ray"/>
    <property type="resolution" value="2.50 A"/>
    <property type="chains" value="A/B/C/D=1-226"/>
</dbReference>
<dbReference type="PDBsum" id="1R4W"/>
<dbReference type="SMR" id="P24473"/>
<dbReference type="FunCoup" id="P24473">
    <property type="interactions" value="1214"/>
</dbReference>
<dbReference type="IntAct" id="P24473">
    <property type="interactions" value="1"/>
</dbReference>
<dbReference type="MINT" id="P24473"/>
<dbReference type="STRING" id="10116.ENSRNOP00000022275"/>
<dbReference type="CarbonylDB" id="P24473"/>
<dbReference type="iPTMnet" id="P24473"/>
<dbReference type="PhosphoSitePlus" id="P24473"/>
<dbReference type="jPOST" id="P24473"/>
<dbReference type="PaxDb" id="10116-ENSRNOP00000022275"/>
<dbReference type="Ensembl" id="ENSRNOT00000022275.5">
    <property type="protein sequence ID" value="ENSRNOP00000022275.2"/>
    <property type="gene ID" value="ENSRNOG00000016484.5"/>
</dbReference>
<dbReference type="GeneID" id="297029"/>
<dbReference type="KEGG" id="rno:297029"/>
<dbReference type="UCSC" id="RGD:735188">
    <property type="organism name" value="rat"/>
</dbReference>
<dbReference type="AGR" id="RGD:735188"/>
<dbReference type="CTD" id="373156"/>
<dbReference type="RGD" id="735188">
    <property type="gene designation" value="Gstk1"/>
</dbReference>
<dbReference type="eggNOG" id="ENOG502R0HS">
    <property type="taxonomic scope" value="Eukaryota"/>
</dbReference>
<dbReference type="GeneTree" id="ENSGT00440000033697"/>
<dbReference type="HOGENOM" id="CLU_069253_1_1_1"/>
<dbReference type="InParanoid" id="P24473"/>
<dbReference type="OMA" id="ECTNSKG"/>
<dbReference type="OrthoDB" id="4664297at2759"/>
<dbReference type="PhylomeDB" id="P24473"/>
<dbReference type="TreeFam" id="TF105323"/>
<dbReference type="Reactome" id="R-RNO-156590">
    <property type="pathway name" value="Glutathione conjugation"/>
</dbReference>
<dbReference type="Reactome" id="R-RNO-9033241">
    <property type="pathway name" value="Peroxisomal protein import"/>
</dbReference>
<dbReference type="EvolutionaryTrace" id="P24473"/>
<dbReference type="PRO" id="PR:P24473"/>
<dbReference type="Proteomes" id="UP000002494">
    <property type="component" value="Chromosome 4"/>
</dbReference>
<dbReference type="Bgee" id="ENSRNOG00000016484">
    <property type="expression patterns" value="Expressed in liver and 20 other cell types or tissues"/>
</dbReference>
<dbReference type="ExpressionAtlas" id="P24473">
    <property type="expression patterns" value="baseline and differential"/>
</dbReference>
<dbReference type="GO" id="GO:0005759">
    <property type="term" value="C:mitochondrial matrix"/>
    <property type="evidence" value="ECO:0000314"/>
    <property type="project" value="HGNC-UCL"/>
</dbReference>
<dbReference type="GO" id="GO:0005739">
    <property type="term" value="C:mitochondrion"/>
    <property type="evidence" value="ECO:0000266"/>
    <property type="project" value="RGD"/>
</dbReference>
<dbReference type="GO" id="GO:0005777">
    <property type="term" value="C:peroxisome"/>
    <property type="evidence" value="ECO:0000266"/>
    <property type="project" value="RGD"/>
</dbReference>
<dbReference type="GO" id="GO:0004602">
    <property type="term" value="F:glutathione peroxidase activity"/>
    <property type="evidence" value="ECO:0000266"/>
    <property type="project" value="RGD"/>
</dbReference>
<dbReference type="GO" id="GO:0004364">
    <property type="term" value="F:glutathione transferase activity"/>
    <property type="evidence" value="ECO:0000266"/>
    <property type="project" value="RGD"/>
</dbReference>
<dbReference type="GO" id="GO:0030855">
    <property type="term" value="P:epithelial cell differentiation"/>
    <property type="evidence" value="ECO:0000266"/>
    <property type="project" value="RGD"/>
</dbReference>
<dbReference type="GO" id="GO:0006749">
    <property type="term" value="P:glutathione metabolic process"/>
    <property type="evidence" value="ECO:0000266"/>
    <property type="project" value="RGD"/>
</dbReference>
<dbReference type="CDD" id="cd03021">
    <property type="entry name" value="DsbA_GSTK"/>
    <property type="match status" value="1"/>
</dbReference>
<dbReference type="FunFam" id="3.40.30.10:FF:000096">
    <property type="entry name" value="Glutathione S-transferase kappa"/>
    <property type="match status" value="1"/>
</dbReference>
<dbReference type="Gene3D" id="3.40.30.10">
    <property type="entry name" value="Glutaredoxin"/>
    <property type="match status" value="1"/>
</dbReference>
<dbReference type="InterPro" id="IPR001853">
    <property type="entry name" value="DSBA-like_thioredoxin_dom"/>
</dbReference>
<dbReference type="InterPro" id="IPR051924">
    <property type="entry name" value="GST_Kappa/NadH"/>
</dbReference>
<dbReference type="InterPro" id="IPR044088">
    <property type="entry name" value="GSTK"/>
</dbReference>
<dbReference type="InterPro" id="IPR014440">
    <property type="entry name" value="HCCAis_GSTk"/>
</dbReference>
<dbReference type="InterPro" id="IPR036249">
    <property type="entry name" value="Thioredoxin-like_sf"/>
</dbReference>
<dbReference type="PANTHER" id="PTHR42943">
    <property type="entry name" value="GLUTATHIONE S-TRANSFERASE KAPPA"/>
    <property type="match status" value="1"/>
</dbReference>
<dbReference type="PANTHER" id="PTHR42943:SF2">
    <property type="entry name" value="GLUTATHIONE S-TRANSFERASE KAPPA 1"/>
    <property type="match status" value="1"/>
</dbReference>
<dbReference type="Pfam" id="PF01323">
    <property type="entry name" value="DSBA"/>
    <property type="match status" value="1"/>
</dbReference>
<dbReference type="PIRSF" id="PIRSF006386">
    <property type="entry name" value="HCCAis_GSTk"/>
    <property type="match status" value="1"/>
</dbReference>
<dbReference type="SUPFAM" id="SSF52833">
    <property type="entry name" value="Thioredoxin-like"/>
    <property type="match status" value="1"/>
</dbReference>
<sequence length="226" mass="25493">MGPAPRVLELFYDVLSPYSWLGFEVLCRYQHLWNIKLKLRPALLAGIMKDSGNQPPAMVPHKGQYILKEIPLLKQLFQVPMSVPKDFFGEHVKKGTVNAMRFLTAVSMEQPEMLEKVSRELWMRIWSRDEDITESQNILSAAEKAGMATAQAQHLLNKISTELVKSKLRETTGAACKYGAFGLPTTVAHVDGKTYMLFGSDRMELLAYLLGEKWMGPVPPTLNARL</sequence>